<reference key="1">
    <citation type="submission" date="2007-05" db="EMBL/GenBank/DDBJ databases">
        <title>Complete sequence of chromosome of Acidiphilium cryptum JF-5.</title>
        <authorList>
            <consortium name="US DOE Joint Genome Institute"/>
            <person name="Copeland A."/>
            <person name="Lucas S."/>
            <person name="Lapidus A."/>
            <person name="Barry K."/>
            <person name="Detter J.C."/>
            <person name="Glavina del Rio T."/>
            <person name="Hammon N."/>
            <person name="Israni S."/>
            <person name="Dalin E."/>
            <person name="Tice H."/>
            <person name="Pitluck S."/>
            <person name="Sims D."/>
            <person name="Brettin T."/>
            <person name="Bruce D."/>
            <person name="Han C."/>
            <person name="Schmutz J."/>
            <person name="Larimer F."/>
            <person name="Land M."/>
            <person name="Hauser L."/>
            <person name="Kyrpides N."/>
            <person name="Kim E."/>
            <person name="Magnuson T."/>
            <person name="Richardson P."/>
        </authorList>
    </citation>
    <scope>NUCLEOTIDE SEQUENCE [LARGE SCALE GENOMIC DNA]</scope>
    <source>
        <strain>JF-5</strain>
    </source>
</reference>
<evidence type="ECO:0000255" key="1">
    <source>
        <dbReference type="HAMAP-Rule" id="MF_00394"/>
    </source>
</evidence>
<feature type="chain" id="PRO_1000049476" description="Glycerol-3-phosphate dehydrogenase [NAD(P)+]">
    <location>
        <begin position="1"/>
        <end position="321"/>
    </location>
</feature>
<feature type="active site" description="Proton acceptor" evidence="1">
    <location>
        <position position="184"/>
    </location>
</feature>
<feature type="binding site" evidence="1">
    <location>
        <position position="15"/>
    </location>
    <ligand>
        <name>NADPH</name>
        <dbReference type="ChEBI" id="CHEBI:57783"/>
    </ligand>
</feature>
<feature type="binding site" evidence="1">
    <location>
        <position position="35"/>
    </location>
    <ligand>
        <name>NADPH</name>
        <dbReference type="ChEBI" id="CHEBI:57783"/>
    </ligand>
</feature>
<feature type="binding site" evidence="1">
    <location>
        <position position="101"/>
    </location>
    <ligand>
        <name>NADPH</name>
        <dbReference type="ChEBI" id="CHEBI:57783"/>
    </ligand>
</feature>
<feature type="binding site" evidence="1">
    <location>
        <position position="101"/>
    </location>
    <ligand>
        <name>sn-glycerol 3-phosphate</name>
        <dbReference type="ChEBI" id="CHEBI:57597"/>
    </ligand>
</feature>
<feature type="binding site" evidence="1">
    <location>
        <position position="129"/>
    </location>
    <ligand>
        <name>sn-glycerol 3-phosphate</name>
        <dbReference type="ChEBI" id="CHEBI:57597"/>
    </ligand>
</feature>
<feature type="binding site" evidence="1">
    <location>
        <position position="133"/>
    </location>
    <ligand>
        <name>NADPH</name>
        <dbReference type="ChEBI" id="CHEBI:57783"/>
    </ligand>
</feature>
<feature type="binding site" evidence="1">
    <location>
        <position position="184"/>
    </location>
    <ligand>
        <name>sn-glycerol 3-phosphate</name>
        <dbReference type="ChEBI" id="CHEBI:57597"/>
    </ligand>
</feature>
<feature type="binding site" evidence="1">
    <location>
        <position position="237"/>
    </location>
    <ligand>
        <name>sn-glycerol 3-phosphate</name>
        <dbReference type="ChEBI" id="CHEBI:57597"/>
    </ligand>
</feature>
<feature type="binding site" evidence="1">
    <location>
        <position position="247"/>
    </location>
    <ligand>
        <name>sn-glycerol 3-phosphate</name>
        <dbReference type="ChEBI" id="CHEBI:57597"/>
    </ligand>
</feature>
<feature type="binding site" evidence="1">
    <location>
        <position position="248"/>
    </location>
    <ligand>
        <name>NADPH</name>
        <dbReference type="ChEBI" id="CHEBI:57783"/>
    </ligand>
</feature>
<feature type="binding site" evidence="1">
    <location>
        <position position="248"/>
    </location>
    <ligand>
        <name>sn-glycerol 3-phosphate</name>
        <dbReference type="ChEBI" id="CHEBI:57597"/>
    </ligand>
</feature>
<feature type="binding site" evidence="1">
    <location>
        <position position="249"/>
    </location>
    <ligand>
        <name>sn-glycerol 3-phosphate</name>
        <dbReference type="ChEBI" id="CHEBI:57597"/>
    </ligand>
</feature>
<feature type="binding site" evidence="1">
    <location>
        <position position="268"/>
    </location>
    <ligand>
        <name>NADPH</name>
        <dbReference type="ChEBI" id="CHEBI:57783"/>
    </ligand>
</feature>
<feature type="binding site" evidence="1">
    <location>
        <position position="270"/>
    </location>
    <ligand>
        <name>NADPH</name>
        <dbReference type="ChEBI" id="CHEBI:57783"/>
    </ligand>
</feature>
<name>GPDA_ACICJ</name>
<proteinExistence type="inferred from homology"/>
<protein>
    <recommendedName>
        <fullName evidence="1">Glycerol-3-phosphate dehydrogenase [NAD(P)+]</fullName>
        <ecNumber evidence="1">1.1.1.94</ecNumber>
    </recommendedName>
    <alternativeName>
        <fullName evidence="1">NAD(P)(+)-dependent glycerol-3-phosphate dehydrogenase</fullName>
    </alternativeName>
    <alternativeName>
        <fullName evidence="1">NAD(P)H-dependent dihydroxyacetone-phosphate reductase</fullName>
    </alternativeName>
</protein>
<organism>
    <name type="scientific">Acidiphilium cryptum (strain JF-5)</name>
    <dbReference type="NCBI Taxonomy" id="349163"/>
    <lineage>
        <taxon>Bacteria</taxon>
        <taxon>Pseudomonadati</taxon>
        <taxon>Pseudomonadota</taxon>
        <taxon>Alphaproteobacteria</taxon>
        <taxon>Acetobacterales</taxon>
        <taxon>Acidocellaceae</taxon>
        <taxon>Acidiphilium</taxon>
    </lineage>
</organism>
<keyword id="KW-0963">Cytoplasm</keyword>
<keyword id="KW-0444">Lipid biosynthesis</keyword>
<keyword id="KW-0443">Lipid metabolism</keyword>
<keyword id="KW-0520">NAD</keyword>
<keyword id="KW-0521">NADP</keyword>
<keyword id="KW-0547">Nucleotide-binding</keyword>
<keyword id="KW-0560">Oxidoreductase</keyword>
<keyword id="KW-0594">Phospholipid biosynthesis</keyword>
<keyword id="KW-1208">Phospholipid metabolism</keyword>
<keyword id="KW-1185">Reference proteome</keyword>
<gene>
    <name evidence="1" type="primary">gpsA</name>
    <name type="ordered locus">Acry_1484</name>
</gene>
<comment type="function">
    <text evidence="1">Catalyzes the reduction of the glycolytic intermediate dihydroxyacetone phosphate (DHAP) to sn-glycerol 3-phosphate (G3P), the key precursor for phospholipid synthesis.</text>
</comment>
<comment type="catalytic activity">
    <reaction evidence="1">
        <text>sn-glycerol 3-phosphate + NAD(+) = dihydroxyacetone phosphate + NADH + H(+)</text>
        <dbReference type="Rhea" id="RHEA:11092"/>
        <dbReference type="ChEBI" id="CHEBI:15378"/>
        <dbReference type="ChEBI" id="CHEBI:57540"/>
        <dbReference type="ChEBI" id="CHEBI:57597"/>
        <dbReference type="ChEBI" id="CHEBI:57642"/>
        <dbReference type="ChEBI" id="CHEBI:57945"/>
        <dbReference type="EC" id="1.1.1.94"/>
    </reaction>
    <physiologicalReaction direction="right-to-left" evidence="1">
        <dbReference type="Rhea" id="RHEA:11094"/>
    </physiologicalReaction>
</comment>
<comment type="catalytic activity">
    <reaction evidence="1">
        <text>sn-glycerol 3-phosphate + NADP(+) = dihydroxyacetone phosphate + NADPH + H(+)</text>
        <dbReference type="Rhea" id="RHEA:11096"/>
        <dbReference type="ChEBI" id="CHEBI:15378"/>
        <dbReference type="ChEBI" id="CHEBI:57597"/>
        <dbReference type="ChEBI" id="CHEBI:57642"/>
        <dbReference type="ChEBI" id="CHEBI:57783"/>
        <dbReference type="ChEBI" id="CHEBI:58349"/>
        <dbReference type="EC" id="1.1.1.94"/>
    </reaction>
    <physiologicalReaction direction="right-to-left" evidence="1">
        <dbReference type="Rhea" id="RHEA:11098"/>
    </physiologicalReaction>
</comment>
<comment type="pathway">
    <text evidence="1">Membrane lipid metabolism; glycerophospholipid metabolism.</text>
</comment>
<comment type="subcellular location">
    <subcellularLocation>
        <location evidence="1">Cytoplasm</location>
    </subcellularLocation>
</comment>
<comment type="similarity">
    <text evidence="1">Belongs to the NAD-dependent glycerol-3-phosphate dehydrogenase family.</text>
</comment>
<accession>A5FYL0</accession>
<sequence length="321" mass="32777">MTAHPEFAVIGAGAWGTALASLYAAQGRRVALVARDSTKAAALATTRTTPRLPGLRLPDSLAVTARPPEAPVTLLAVPFQHLRETLGRLPQGNGTLVLCAKGVERESGALGPEIAAEMEPRRPCAVLTGPNFAHEIAIGLPAAAVLAMTDDGARRDLVQHLATPRLRVYGSADPIGAALGGAAKNVIAIAAGAVIGAGLGENARAALITRGLAEIARLTEALGGAAETISGLAGLGDLILTATGSASRNYRAGLAFGQGKRPDTEAGVIEGIATAPALLARARATGCEMPVTEAVTDLLAGRITLEASMNRLLRRALRDER</sequence>
<dbReference type="EC" id="1.1.1.94" evidence="1"/>
<dbReference type="EMBL" id="CP000697">
    <property type="protein sequence ID" value="ABQ30692.1"/>
    <property type="molecule type" value="Genomic_DNA"/>
</dbReference>
<dbReference type="RefSeq" id="WP_007421859.1">
    <property type="nucleotide sequence ID" value="NC_009484.1"/>
</dbReference>
<dbReference type="SMR" id="A5FYL0"/>
<dbReference type="STRING" id="349163.Acry_1484"/>
<dbReference type="KEGG" id="acr:Acry_1484"/>
<dbReference type="eggNOG" id="COG0240">
    <property type="taxonomic scope" value="Bacteria"/>
</dbReference>
<dbReference type="HOGENOM" id="CLU_033449_0_2_5"/>
<dbReference type="UniPathway" id="UPA00940"/>
<dbReference type="Proteomes" id="UP000000245">
    <property type="component" value="Chromosome"/>
</dbReference>
<dbReference type="GO" id="GO:0005829">
    <property type="term" value="C:cytosol"/>
    <property type="evidence" value="ECO:0007669"/>
    <property type="project" value="TreeGrafter"/>
</dbReference>
<dbReference type="GO" id="GO:0047952">
    <property type="term" value="F:glycerol-3-phosphate dehydrogenase [NAD(P)+] activity"/>
    <property type="evidence" value="ECO:0007669"/>
    <property type="project" value="UniProtKB-UniRule"/>
</dbReference>
<dbReference type="GO" id="GO:0051287">
    <property type="term" value="F:NAD binding"/>
    <property type="evidence" value="ECO:0007669"/>
    <property type="project" value="InterPro"/>
</dbReference>
<dbReference type="GO" id="GO:0005975">
    <property type="term" value="P:carbohydrate metabolic process"/>
    <property type="evidence" value="ECO:0007669"/>
    <property type="project" value="InterPro"/>
</dbReference>
<dbReference type="GO" id="GO:0046167">
    <property type="term" value="P:glycerol-3-phosphate biosynthetic process"/>
    <property type="evidence" value="ECO:0007669"/>
    <property type="project" value="UniProtKB-UniRule"/>
</dbReference>
<dbReference type="GO" id="GO:0046168">
    <property type="term" value="P:glycerol-3-phosphate catabolic process"/>
    <property type="evidence" value="ECO:0007669"/>
    <property type="project" value="InterPro"/>
</dbReference>
<dbReference type="GO" id="GO:0006650">
    <property type="term" value="P:glycerophospholipid metabolic process"/>
    <property type="evidence" value="ECO:0007669"/>
    <property type="project" value="UniProtKB-UniRule"/>
</dbReference>
<dbReference type="GO" id="GO:0008654">
    <property type="term" value="P:phospholipid biosynthetic process"/>
    <property type="evidence" value="ECO:0007669"/>
    <property type="project" value="UniProtKB-KW"/>
</dbReference>
<dbReference type="Gene3D" id="1.10.1040.10">
    <property type="entry name" value="N-(1-d-carboxylethyl)-l-norvaline Dehydrogenase, domain 2"/>
    <property type="match status" value="1"/>
</dbReference>
<dbReference type="Gene3D" id="3.40.50.720">
    <property type="entry name" value="NAD(P)-binding Rossmann-like Domain"/>
    <property type="match status" value="1"/>
</dbReference>
<dbReference type="HAMAP" id="MF_00394">
    <property type="entry name" value="NAD_Glyc3P_dehydrog"/>
    <property type="match status" value="1"/>
</dbReference>
<dbReference type="InterPro" id="IPR008927">
    <property type="entry name" value="6-PGluconate_DH-like_C_sf"/>
</dbReference>
<dbReference type="InterPro" id="IPR013328">
    <property type="entry name" value="6PGD_dom2"/>
</dbReference>
<dbReference type="InterPro" id="IPR006168">
    <property type="entry name" value="G3P_DH_NAD-dep"/>
</dbReference>
<dbReference type="InterPro" id="IPR006109">
    <property type="entry name" value="G3P_DH_NAD-dep_C"/>
</dbReference>
<dbReference type="InterPro" id="IPR011128">
    <property type="entry name" value="G3P_DH_NAD-dep_N"/>
</dbReference>
<dbReference type="InterPro" id="IPR036291">
    <property type="entry name" value="NAD(P)-bd_dom_sf"/>
</dbReference>
<dbReference type="NCBIfam" id="NF000940">
    <property type="entry name" value="PRK00094.1-2"/>
    <property type="match status" value="1"/>
</dbReference>
<dbReference type="NCBIfam" id="NF000942">
    <property type="entry name" value="PRK00094.1-4"/>
    <property type="match status" value="1"/>
</dbReference>
<dbReference type="PANTHER" id="PTHR11728">
    <property type="entry name" value="GLYCEROL-3-PHOSPHATE DEHYDROGENASE"/>
    <property type="match status" value="1"/>
</dbReference>
<dbReference type="PANTHER" id="PTHR11728:SF1">
    <property type="entry name" value="GLYCEROL-3-PHOSPHATE DEHYDROGENASE [NAD(+)] 2, CHLOROPLASTIC"/>
    <property type="match status" value="1"/>
</dbReference>
<dbReference type="Pfam" id="PF07479">
    <property type="entry name" value="NAD_Gly3P_dh_C"/>
    <property type="match status" value="1"/>
</dbReference>
<dbReference type="Pfam" id="PF01210">
    <property type="entry name" value="NAD_Gly3P_dh_N"/>
    <property type="match status" value="1"/>
</dbReference>
<dbReference type="PIRSF" id="PIRSF000114">
    <property type="entry name" value="Glycerol-3-P_dh"/>
    <property type="match status" value="1"/>
</dbReference>
<dbReference type="PRINTS" id="PR00077">
    <property type="entry name" value="GPDHDRGNASE"/>
</dbReference>
<dbReference type="SUPFAM" id="SSF48179">
    <property type="entry name" value="6-phosphogluconate dehydrogenase C-terminal domain-like"/>
    <property type="match status" value="1"/>
</dbReference>
<dbReference type="SUPFAM" id="SSF51735">
    <property type="entry name" value="NAD(P)-binding Rossmann-fold domains"/>
    <property type="match status" value="1"/>
</dbReference>
<dbReference type="PROSITE" id="PS00957">
    <property type="entry name" value="NAD_G3PDH"/>
    <property type="match status" value="1"/>
</dbReference>